<protein>
    <recommendedName>
        <fullName evidence="1">2,3-bisphosphoglycerate-independent phosphoglycerate mutase</fullName>
        <shortName evidence="1">BPG-independent PGAM</shortName>
        <shortName evidence="1">Phosphoglyceromutase</shortName>
        <shortName evidence="1">iPGM</shortName>
        <ecNumber evidence="1">5.4.2.12</ecNumber>
    </recommendedName>
</protein>
<keyword id="KW-0324">Glycolysis</keyword>
<keyword id="KW-0413">Isomerase</keyword>
<keyword id="KW-0464">Manganese</keyword>
<keyword id="KW-0479">Metal-binding</keyword>
<keyword id="KW-0597">Phosphoprotein</keyword>
<keyword id="KW-0749">Sporulation</keyword>
<proteinExistence type="inferred from homology"/>
<feature type="chain" id="PRO_1000063949" description="2,3-bisphosphoglycerate-independent phosphoglycerate mutase">
    <location>
        <begin position="1"/>
        <end position="511"/>
    </location>
</feature>
<feature type="active site" description="Phosphoserine intermediate" evidence="1">
    <location>
        <position position="62"/>
    </location>
</feature>
<feature type="binding site" evidence="1">
    <location>
        <position position="12"/>
    </location>
    <ligand>
        <name>Mn(2+)</name>
        <dbReference type="ChEBI" id="CHEBI:29035"/>
        <label>2</label>
    </ligand>
</feature>
<feature type="binding site" evidence="1">
    <location>
        <position position="62"/>
    </location>
    <ligand>
        <name>Mn(2+)</name>
        <dbReference type="ChEBI" id="CHEBI:29035"/>
        <label>2</label>
    </ligand>
</feature>
<feature type="binding site" evidence="1">
    <location>
        <position position="123"/>
    </location>
    <ligand>
        <name>substrate</name>
    </ligand>
</feature>
<feature type="binding site" evidence="1">
    <location>
        <begin position="153"/>
        <end position="154"/>
    </location>
    <ligand>
        <name>substrate</name>
    </ligand>
</feature>
<feature type="binding site" evidence="1">
    <location>
        <position position="185"/>
    </location>
    <ligand>
        <name>substrate</name>
    </ligand>
</feature>
<feature type="binding site" evidence="1">
    <location>
        <position position="191"/>
    </location>
    <ligand>
        <name>substrate</name>
    </ligand>
</feature>
<feature type="binding site" evidence="1">
    <location>
        <begin position="261"/>
        <end position="264"/>
    </location>
    <ligand>
        <name>substrate</name>
    </ligand>
</feature>
<feature type="binding site" evidence="1">
    <location>
        <position position="336"/>
    </location>
    <ligand>
        <name>substrate</name>
    </ligand>
</feature>
<feature type="binding site" evidence="1">
    <location>
        <position position="403"/>
    </location>
    <ligand>
        <name>Mn(2+)</name>
        <dbReference type="ChEBI" id="CHEBI:29035"/>
        <label>1</label>
    </ligand>
</feature>
<feature type="binding site" evidence="1">
    <location>
        <position position="407"/>
    </location>
    <ligand>
        <name>Mn(2+)</name>
        <dbReference type="ChEBI" id="CHEBI:29035"/>
        <label>1</label>
    </ligand>
</feature>
<feature type="binding site" evidence="1">
    <location>
        <position position="444"/>
    </location>
    <ligand>
        <name>Mn(2+)</name>
        <dbReference type="ChEBI" id="CHEBI:29035"/>
        <label>2</label>
    </ligand>
</feature>
<feature type="binding site" evidence="1">
    <location>
        <position position="445"/>
    </location>
    <ligand>
        <name>Mn(2+)</name>
        <dbReference type="ChEBI" id="CHEBI:29035"/>
        <label>2</label>
    </ligand>
</feature>
<feature type="binding site" evidence="1">
    <location>
        <position position="462"/>
    </location>
    <ligand>
        <name>Mn(2+)</name>
        <dbReference type="ChEBI" id="CHEBI:29035"/>
        <label>1</label>
    </ligand>
</feature>
<feature type="modified residue" description="Phosphotyrosine" evidence="1">
    <location>
        <position position="36"/>
    </location>
</feature>
<evidence type="ECO:0000255" key="1">
    <source>
        <dbReference type="HAMAP-Rule" id="MF_01038"/>
    </source>
</evidence>
<name>GPMI_BACP2</name>
<dbReference type="EC" id="5.4.2.12" evidence="1"/>
<dbReference type="EMBL" id="CP000813">
    <property type="protein sequence ID" value="ABV63708.1"/>
    <property type="molecule type" value="Genomic_DNA"/>
</dbReference>
<dbReference type="RefSeq" id="WP_012011301.1">
    <property type="nucleotide sequence ID" value="NZ_VEIS01000009.1"/>
</dbReference>
<dbReference type="SMR" id="A8FHJ1"/>
<dbReference type="STRING" id="315750.BPUM_3054"/>
<dbReference type="GeneID" id="5622344"/>
<dbReference type="KEGG" id="bpu:BPUM_3054"/>
<dbReference type="eggNOG" id="COG0696">
    <property type="taxonomic scope" value="Bacteria"/>
</dbReference>
<dbReference type="HOGENOM" id="CLU_026099_2_0_9"/>
<dbReference type="OrthoDB" id="9800863at2"/>
<dbReference type="UniPathway" id="UPA00109">
    <property type="reaction ID" value="UER00186"/>
</dbReference>
<dbReference type="Proteomes" id="UP000001355">
    <property type="component" value="Chromosome"/>
</dbReference>
<dbReference type="GO" id="GO:0005829">
    <property type="term" value="C:cytosol"/>
    <property type="evidence" value="ECO:0007669"/>
    <property type="project" value="TreeGrafter"/>
</dbReference>
<dbReference type="GO" id="GO:0030145">
    <property type="term" value="F:manganese ion binding"/>
    <property type="evidence" value="ECO:0007669"/>
    <property type="project" value="UniProtKB-UniRule"/>
</dbReference>
<dbReference type="GO" id="GO:0004619">
    <property type="term" value="F:phosphoglycerate mutase activity"/>
    <property type="evidence" value="ECO:0007669"/>
    <property type="project" value="UniProtKB-EC"/>
</dbReference>
<dbReference type="GO" id="GO:0006007">
    <property type="term" value="P:glucose catabolic process"/>
    <property type="evidence" value="ECO:0007669"/>
    <property type="project" value="InterPro"/>
</dbReference>
<dbReference type="GO" id="GO:0006096">
    <property type="term" value="P:glycolytic process"/>
    <property type="evidence" value="ECO:0007669"/>
    <property type="project" value="UniProtKB-UniRule"/>
</dbReference>
<dbReference type="GO" id="GO:0030435">
    <property type="term" value="P:sporulation resulting in formation of a cellular spore"/>
    <property type="evidence" value="ECO:0007669"/>
    <property type="project" value="UniProtKB-KW"/>
</dbReference>
<dbReference type="CDD" id="cd16010">
    <property type="entry name" value="iPGM"/>
    <property type="match status" value="1"/>
</dbReference>
<dbReference type="FunFam" id="3.40.1450.10:FF:000001">
    <property type="entry name" value="2,3-bisphosphoglycerate-independent phosphoglycerate mutase"/>
    <property type="match status" value="1"/>
</dbReference>
<dbReference type="FunFam" id="3.40.720.10:FF:000001">
    <property type="entry name" value="2,3-bisphosphoglycerate-independent phosphoglycerate mutase"/>
    <property type="match status" value="1"/>
</dbReference>
<dbReference type="Gene3D" id="3.40.720.10">
    <property type="entry name" value="Alkaline Phosphatase, subunit A"/>
    <property type="match status" value="1"/>
</dbReference>
<dbReference type="Gene3D" id="3.40.1450.10">
    <property type="entry name" value="BPG-independent phosphoglycerate mutase, domain B"/>
    <property type="match status" value="1"/>
</dbReference>
<dbReference type="HAMAP" id="MF_01038">
    <property type="entry name" value="GpmI"/>
    <property type="match status" value="1"/>
</dbReference>
<dbReference type="InterPro" id="IPR017850">
    <property type="entry name" value="Alkaline_phosphatase_core_sf"/>
</dbReference>
<dbReference type="InterPro" id="IPR011258">
    <property type="entry name" value="BPG-indep_PGM_N"/>
</dbReference>
<dbReference type="InterPro" id="IPR006124">
    <property type="entry name" value="Metalloenzyme"/>
</dbReference>
<dbReference type="InterPro" id="IPR036646">
    <property type="entry name" value="PGAM_B_sf"/>
</dbReference>
<dbReference type="InterPro" id="IPR005995">
    <property type="entry name" value="Pgm_bpd_ind"/>
</dbReference>
<dbReference type="NCBIfam" id="TIGR01307">
    <property type="entry name" value="pgm_bpd_ind"/>
    <property type="match status" value="1"/>
</dbReference>
<dbReference type="PANTHER" id="PTHR31637">
    <property type="entry name" value="2,3-BISPHOSPHOGLYCERATE-INDEPENDENT PHOSPHOGLYCERATE MUTASE"/>
    <property type="match status" value="1"/>
</dbReference>
<dbReference type="PANTHER" id="PTHR31637:SF0">
    <property type="entry name" value="2,3-BISPHOSPHOGLYCERATE-INDEPENDENT PHOSPHOGLYCERATE MUTASE"/>
    <property type="match status" value="1"/>
</dbReference>
<dbReference type="Pfam" id="PF06415">
    <property type="entry name" value="iPGM_N"/>
    <property type="match status" value="1"/>
</dbReference>
<dbReference type="Pfam" id="PF01676">
    <property type="entry name" value="Metalloenzyme"/>
    <property type="match status" value="1"/>
</dbReference>
<dbReference type="PIRSF" id="PIRSF001492">
    <property type="entry name" value="IPGAM"/>
    <property type="match status" value="1"/>
</dbReference>
<dbReference type="SUPFAM" id="SSF64158">
    <property type="entry name" value="2,3-Bisphosphoglycerate-independent phosphoglycerate mutase, substrate-binding domain"/>
    <property type="match status" value="1"/>
</dbReference>
<dbReference type="SUPFAM" id="SSF53649">
    <property type="entry name" value="Alkaline phosphatase-like"/>
    <property type="match status" value="1"/>
</dbReference>
<accession>A8FHJ1</accession>
<gene>
    <name evidence="1" type="primary">gpmI</name>
    <name type="ordered locus">BPUM_3054</name>
</gene>
<reference key="1">
    <citation type="journal article" date="2007" name="PLoS ONE">
        <title>Paradoxical DNA repair and peroxide resistance gene conservation in Bacillus pumilus SAFR-032.</title>
        <authorList>
            <person name="Gioia J."/>
            <person name="Yerrapragada S."/>
            <person name="Qin X."/>
            <person name="Jiang H."/>
            <person name="Igboeli O.C."/>
            <person name="Muzny D."/>
            <person name="Dugan-Rocha S."/>
            <person name="Ding Y."/>
            <person name="Hawes A."/>
            <person name="Liu W."/>
            <person name="Perez L."/>
            <person name="Kovar C."/>
            <person name="Dinh H."/>
            <person name="Lee S."/>
            <person name="Nazareth L."/>
            <person name="Blyth P."/>
            <person name="Holder M."/>
            <person name="Buhay C."/>
            <person name="Tirumalai M.R."/>
            <person name="Liu Y."/>
            <person name="Dasgupta I."/>
            <person name="Bokhetache L."/>
            <person name="Fujita M."/>
            <person name="Karouia F."/>
            <person name="Eswara Moorthy P."/>
            <person name="Siefert J."/>
            <person name="Uzman A."/>
            <person name="Buzumbo P."/>
            <person name="Verma A."/>
            <person name="Zwiya H."/>
            <person name="McWilliams B.D."/>
            <person name="Olowu A."/>
            <person name="Clinkenbeard K.D."/>
            <person name="Newcombe D."/>
            <person name="Golebiewski L."/>
            <person name="Petrosino J.F."/>
            <person name="Nicholson W.L."/>
            <person name="Fox G.E."/>
            <person name="Venkateswaran K."/>
            <person name="Highlander S.K."/>
            <person name="Weinstock G.M."/>
        </authorList>
    </citation>
    <scope>NUCLEOTIDE SEQUENCE [LARGE SCALE GENOMIC DNA]</scope>
    <source>
        <strain>SAFR-032</strain>
    </source>
</reference>
<sequence>MSKKPAALIILDGFGLRGETVGNAVAQAKKPNFDRYWNEFPHQTLTASGEAVGLPQGQMGNSEVGHLNIGAGRIVYQSLTRVNVAIRDGEFEKNETFLEAMTYAKENDKALHLFGLLSDGGVHSHIQHLFALLKLAKKEGLTKVYIHGFLDGRDVGQKTAKVYLKQLEEQIKEIGVGEVATLSGRYYSMDRDKRWDRVEKAYRAMAYGEGPSYQNIYDVVDDSYENGIYDEFVIPSVITRENGEPVAKVNDGDSVIFYNFRPDRAIQISNTFTNEDFRSFDRGEAHPKNLHFVCFTHFSETVDGYVAFKPVNLDNTVGEVLAQNGLKQLRIAETEKYPHVTFFMSGGREEEFPGEDRILINSPDVATYDLKPEMSAYEVKDALVADINADKHDAIILNFANPDMVGHSGMLEPTIKAIEAVDECLGAVVDAILAKGGHAIITADHGNADVLITEEGKPHTAHTTNPVPVIVTKKGATLREGGILADLSPTLLDLLGVEKPKEMTGTSLIQK</sequence>
<organism>
    <name type="scientific">Bacillus pumilus (strain SAFR-032)</name>
    <dbReference type="NCBI Taxonomy" id="315750"/>
    <lineage>
        <taxon>Bacteria</taxon>
        <taxon>Bacillati</taxon>
        <taxon>Bacillota</taxon>
        <taxon>Bacilli</taxon>
        <taxon>Bacillales</taxon>
        <taxon>Bacillaceae</taxon>
        <taxon>Bacillus</taxon>
    </lineage>
</organism>
<comment type="function">
    <text evidence="1">Essential for rapid growth and for sporulation. Catalyzes the interconversion of 2-phosphoglycerate and 3-phosphoglycerate.</text>
</comment>
<comment type="catalytic activity">
    <reaction evidence="1">
        <text>(2R)-2-phosphoglycerate = (2R)-3-phosphoglycerate</text>
        <dbReference type="Rhea" id="RHEA:15901"/>
        <dbReference type="ChEBI" id="CHEBI:58272"/>
        <dbReference type="ChEBI" id="CHEBI:58289"/>
        <dbReference type="EC" id="5.4.2.12"/>
    </reaction>
</comment>
<comment type="cofactor">
    <cofactor evidence="1">
        <name>Mn(2+)</name>
        <dbReference type="ChEBI" id="CHEBI:29035"/>
    </cofactor>
    <text evidence="1">Binds 2 manganese ions per subunit.</text>
</comment>
<comment type="pathway">
    <text evidence="1">Carbohydrate degradation; glycolysis; pyruvate from D-glyceraldehyde 3-phosphate: step 3/5.</text>
</comment>
<comment type="subunit">
    <text evidence="1">Monomer.</text>
</comment>
<comment type="similarity">
    <text evidence="1">Belongs to the BPG-independent phosphoglycerate mutase family.</text>
</comment>